<evidence type="ECO:0000255" key="1">
    <source>
        <dbReference type="HAMAP-Rule" id="MF_01333"/>
    </source>
</evidence>
<evidence type="ECO:0000305" key="2"/>
<protein>
    <recommendedName>
        <fullName evidence="1">Large ribosomal subunit protein uL5</fullName>
    </recommendedName>
    <alternativeName>
        <fullName evidence="2">50S ribosomal protein L5</fullName>
    </alternativeName>
</protein>
<comment type="function">
    <text evidence="1">This is one of the proteins that bind and probably mediate the attachment of the 5S RNA into the large ribosomal subunit, where it forms part of the central protuberance. In the 70S ribosome it contacts protein S13 of the 30S subunit (bridge B1b), connecting the 2 subunits; this bridge is implicated in subunit movement. Contacts the P site tRNA; the 5S rRNA and some of its associated proteins might help stabilize positioning of ribosome-bound tRNAs.</text>
</comment>
<comment type="subunit">
    <text evidence="1">Part of the 50S ribosomal subunit; part of the 5S rRNA/L5/L18/L25 subcomplex. Contacts the 5S rRNA and the P site tRNA. Forms a bridge to the 30S subunit in the 70S ribosome.</text>
</comment>
<comment type="similarity">
    <text evidence="1">Belongs to the universal ribosomal protein uL5 family.</text>
</comment>
<accession>A5V5Z0</accession>
<reference key="1">
    <citation type="journal article" date="2010" name="J. Bacteriol.">
        <title>Genome sequence of the dioxin-mineralizing bacterium Sphingomonas wittichii RW1.</title>
        <authorList>
            <person name="Miller T.R."/>
            <person name="Delcher A.L."/>
            <person name="Salzberg S.L."/>
            <person name="Saunders E."/>
            <person name="Detter J.C."/>
            <person name="Halden R.U."/>
        </authorList>
    </citation>
    <scope>NUCLEOTIDE SEQUENCE [LARGE SCALE GENOMIC DNA]</scope>
    <source>
        <strain>DSM 6014 / CCUG 31198 / JCM 15750 / NBRC 105917 / EY 4224 / RW1</strain>
    </source>
</reference>
<gene>
    <name evidence="1" type="primary">rplE</name>
    <name type="ordered locus">Swit_1341</name>
</gene>
<name>RL5_RHIWR</name>
<proteinExistence type="inferred from homology"/>
<feature type="chain" id="PRO_1000052835" description="Large ribosomal subunit protein uL5">
    <location>
        <begin position="1"/>
        <end position="193"/>
    </location>
</feature>
<dbReference type="EMBL" id="CP000699">
    <property type="protein sequence ID" value="ABQ67706.1"/>
    <property type="molecule type" value="Genomic_DNA"/>
</dbReference>
<dbReference type="SMR" id="A5V5Z0"/>
<dbReference type="STRING" id="392499.Swit_1341"/>
<dbReference type="PaxDb" id="392499-Swit_1341"/>
<dbReference type="KEGG" id="swi:Swit_1341"/>
<dbReference type="eggNOG" id="COG0094">
    <property type="taxonomic scope" value="Bacteria"/>
</dbReference>
<dbReference type="HOGENOM" id="CLU_061015_2_1_5"/>
<dbReference type="OrthoDB" id="9806626at2"/>
<dbReference type="Proteomes" id="UP000001989">
    <property type="component" value="Chromosome"/>
</dbReference>
<dbReference type="GO" id="GO:1990904">
    <property type="term" value="C:ribonucleoprotein complex"/>
    <property type="evidence" value="ECO:0007669"/>
    <property type="project" value="UniProtKB-KW"/>
</dbReference>
<dbReference type="GO" id="GO:0005840">
    <property type="term" value="C:ribosome"/>
    <property type="evidence" value="ECO:0007669"/>
    <property type="project" value="UniProtKB-KW"/>
</dbReference>
<dbReference type="GO" id="GO:0019843">
    <property type="term" value="F:rRNA binding"/>
    <property type="evidence" value="ECO:0007669"/>
    <property type="project" value="UniProtKB-UniRule"/>
</dbReference>
<dbReference type="GO" id="GO:0003735">
    <property type="term" value="F:structural constituent of ribosome"/>
    <property type="evidence" value="ECO:0007669"/>
    <property type="project" value="InterPro"/>
</dbReference>
<dbReference type="GO" id="GO:0000049">
    <property type="term" value="F:tRNA binding"/>
    <property type="evidence" value="ECO:0007669"/>
    <property type="project" value="UniProtKB-UniRule"/>
</dbReference>
<dbReference type="GO" id="GO:0006412">
    <property type="term" value="P:translation"/>
    <property type="evidence" value="ECO:0007669"/>
    <property type="project" value="UniProtKB-UniRule"/>
</dbReference>
<dbReference type="FunFam" id="3.30.1440.10:FF:000001">
    <property type="entry name" value="50S ribosomal protein L5"/>
    <property type="match status" value="1"/>
</dbReference>
<dbReference type="Gene3D" id="3.30.1440.10">
    <property type="match status" value="1"/>
</dbReference>
<dbReference type="HAMAP" id="MF_01333_B">
    <property type="entry name" value="Ribosomal_uL5_B"/>
    <property type="match status" value="1"/>
</dbReference>
<dbReference type="InterPro" id="IPR002132">
    <property type="entry name" value="Ribosomal_uL5"/>
</dbReference>
<dbReference type="InterPro" id="IPR020930">
    <property type="entry name" value="Ribosomal_uL5_bac-type"/>
</dbReference>
<dbReference type="InterPro" id="IPR031309">
    <property type="entry name" value="Ribosomal_uL5_C"/>
</dbReference>
<dbReference type="InterPro" id="IPR020929">
    <property type="entry name" value="Ribosomal_uL5_CS"/>
</dbReference>
<dbReference type="InterPro" id="IPR022803">
    <property type="entry name" value="Ribosomal_uL5_dom_sf"/>
</dbReference>
<dbReference type="InterPro" id="IPR031310">
    <property type="entry name" value="Ribosomal_uL5_N"/>
</dbReference>
<dbReference type="NCBIfam" id="NF000585">
    <property type="entry name" value="PRK00010.1"/>
    <property type="match status" value="1"/>
</dbReference>
<dbReference type="PANTHER" id="PTHR11994">
    <property type="entry name" value="60S RIBOSOMAL PROTEIN L11-RELATED"/>
    <property type="match status" value="1"/>
</dbReference>
<dbReference type="Pfam" id="PF00281">
    <property type="entry name" value="Ribosomal_L5"/>
    <property type="match status" value="1"/>
</dbReference>
<dbReference type="Pfam" id="PF00673">
    <property type="entry name" value="Ribosomal_L5_C"/>
    <property type="match status" value="1"/>
</dbReference>
<dbReference type="PIRSF" id="PIRSF002161">
    <property type="entry name" value="Ribosomal_L5"/>
    <property type="match status" value="1"/>
</dbReference>
<dbReference type="SUPFAM" id="SSF55282">
    <property type="entry name" value="RL5-like"/>
    <property type="match status" value="1"/>
</dbReference>
<dbReference type="PROSITE" id="PS00358">
    <property type="entry name" value="RIBOSOMAL_L5"/>
    <property type="match status" value="1"/>
</dbReference>
<keyword id="KW-1185">Reference proteome</keyword>
<keyword id="KW-0687">Ribonucleoprotein</keyword>
<keyword id="KW-0689">Ribosomal protein</keyword>
<keyword id="KW-0694">RNA-binding</keyword>
<keyword id="KW-0699">rRNA-binding</keyword>
<keyword id="KW-0820">tRNA-binding</keyword>
<organism>
    <name type="scientific">Rhizorhabdus wittichii (strain DSM 6014 / CCUG 31198 / JCM 15750 / NBRC 105917 / EY 4224 / RW1)</name>
    <name type="common">Sphingomonas wittichii</name>
    <dbReference type="NCBI Taxonomy" id="392499"/>
    <lineage>
        <taxon>Bacteria</taxon>
        <taxon>Pseudomonadati</taxon>
        <taxon>Pseudomonadota</taxon>
        <taxon>Alphaproteobacteria</taxon>
        <taxon>Sphingomonadales</taxon>
        <taxon>Sphingomonadaceae</taxon>
        <taxon>Rhizorhabdus</taxon>
    </lineage>
</organism>
<sequence>MADAYTPRFRKLYDETIVKAMTEKFGYKNHMEVPKITKIVLNMGVGEATQDKKKVEQAALEMTKIAGQKAVITKAKKSIAQFKLREGMPIGAKVTLRRERMYEFLDRFVTIALPRVRDFRGLNPKSFDGRGNYATGLKEQLIFPEISYDSVDKIRGMDVIVATTAKTDDEARELLRLFGFPFPADNEDQKQAA</sequence>